<keyword id="KW-0025">Alternative splicing</keyword>
<keyword id="KW-1015">Disulfide bond</keyword>
<keyword id="KW-0325">Glycoprotein</keyword>
<keyword id="KW-0472">Membrane</keyword>
<keyword id="KW-0597">Phosphoprotein</keyword>
<keyword id="KW-1267">Proteomics identification</keyword>
<keyword id="KW-1185">Reference proteome</keyword>
<keyword id="KW-0732">Signal</keyword>
<keyword id="KW-0812">Transmembrane</keyword>
<keyword id="KW-1133">Transmembrane helix</keyword>
<organism>
    <name type="scientific">Homo sapiens</name>
    <name type="common">Human</name>
    <dbReference type="NCBI Taxonomy" id="9606"/>
    <lineage>
        <taxon>Eukaryota</taxon>
        <taxon>Metazoa</taxon>
        <taxon>Chordata</taxon>
        <taxon>Craniata</taxon>
        <taxon>Vertebrata</taxon>
        <taxon>Euteleostomi</taxon>
        <taxon>Mammalia</taxon>
        <taxon>Eutheria</taxon>
        <taxon>Euarchontoglires</taxon>
        <taxon>Primates</taxon>
        <taxon>Haplorrhini</taxon>
        <taxon>Catarrhini</taxon>
        <taxon>Hominidae</taxon>
        <taxon>Homo</taxon>
    </lineage>
</organism>
<gene>
    <name type="primary">DCBLD1</name>
</gene>
<name>DCBD1_HUMAN</name>
<evidence type="ECO:0000250" key="1"/>
<evidence type="ECO:0000250" key="2">
    <source>
        <dbReference type="UniProtKB" id="Q9D4J3"/>
    </source>
</evidence>
<evidence type="ECO:0000255" key="3"/>
<evidence type="ECO:0000255" key="4">
    <source>
        <dbReference type="PROSITE-ProRule" id="PRU00059"/>
    </source>
</evidence>
<evidence type="ECO:0000255" key="5">
    <source>
        <dbReference type="PROSITE-ProRule" id="PRU00081"/>
    </source>
</evidence>
<evidence type="ECO:0000255" key="6">
    <source>
        <dbReference type="PROSITE-ProRule" id="PRU00123"/>
    </source>
</evidence>
<evidence type="ECO:0000256" key="7">
    <source>
        <dbReference type="SAM" id="MobiDB-lite"/>
    </source>
</evidence>
<evidence type="ECO:0000303" key="8">
    <source>
    </source>
</evidence>
<evidence type="ECO:0000305" key="9"/>
<evidence type="ECO:0007744" key="10">
    <source>
    </source>
</evidence>
<comment type="subcellular location">
    <subcellularLocation>
        <location evidence="9">Membrane</location>
        <topology evidence="9">Single-pass type I membrane protein</topology>
    </subcellularLocation>
</comment>
<comment type="alternative products">
    <event type="alternative splicing"/>
    <isoform>
        <id>Q8N8Z6-1</id>
        <name>1</name>
        <sequence type="displayed"/>
    </isoform>
    <isoform>
        <id>Q8N8Z6-2</id>
        <name>2</name>
        <sequence type="described" ref="VSP_040221 VSP_040222"/>
    </isoform>
</comment>
<comment type="sequence caution" evidence="9">
    <conflict type="frameshift">
        <sequence resource="EMBL-CDS" id="BAC04663"/>
    </conflict>
</comment>
<comment type="sequence caution" evidence="9">
    <conflict type="erroneous initiation">
        <sequence resource="EMBL-CDS" id="BAC05258"/>
    </conflict>
    <text>Truncated N-terminus.</text>
</comment>
<feature type="signal peptide" evidence="3">
    <location>
        <begin position="1"/>
        <end position="34"/>
    </location>
</feature>
<feature type="chain" id="PRO_0000021076" description="Discoidin, CUB and LCCL domain-containing protein 1">
    <location>
        <begin position="35"/>
        <end position="715"/>
    </location>
</feature>
<feature type="topological domain" description="Extracellular" evidence="3">
    <location>
        <begin position="35"/>
        <end position="459"/>
    </location>
</feature>
<feature type="transmembrane region" description="Helical" evidence="3">
    <location>
        <begin position="460"/>
        <end position="480"/>
    </location>
</feature>
<feature type="topological domain" description="Cytoplasmic" evidence="3">
    <location>
        <begin position="481"/>
        <end position="715"/>
    </location>
</feature>
<feature type="domain" description="CUB" evidence="4">
    <location>
        <begin position="41"/>
        <end position="150"/>
    </location>
</feature>
<feature type="domain" description="LCCL" evidence="6">
    <location>
        <begin position="152"/>
        <end position="248"/>
    </location>
</feature>
<feature type="domain" description="F5/8 type C" evidence="5">
    <location>
        <begin position="248"/>
        <end position="412"/>
    </location>
</feature>
<feature type="region of interest" description="Disordered" evidence="7">
    <location>
        <begin position="278"/>
        <end position="312"/>
    </location>
</feature>
<feature type="region of interest" description="Disordered" evidence="7">
    <location>
        <begin position="619"/>
        <end position="702"/>
    </location>
</feature>
<feature type="compositionally biased region" description="Polar residues" evidence="7">
    <location>
        <begin position="295"/>
        <end position="307"/>
    </location>
</feature>
<feature type="modified residue" description="Phosphoserine" evidence="2">
    <location>
        <position position="513"/>
    </location>
</feature>
<feature type="modified residue" description="Phosphothreonine" evidence="10">
    <location>
        <position position="614"/>
    </location>
</feature>
<feature type="glycosylation site" description="N-linked (GlcNAc...) asparagine" evidence="3">
    <location>
        <position position="64"/>
    </location>
</feature>
<feature type="glycosylation site" description="N-linked (GlcNAc...) asparagine" evidence="3">
    <location>
        <position position="124"/>
    </location>
</feature>
<feature type="glycosylation site" description="N-linked (GlcNAc...) asparagine" evidence="3">
    <location>
        <position position="277"/>
    </location>
</feature>
<feature type="glycosylation site" description="N-linked (GlcNAc...) asparagine" evidence="3">
    <location>
        <position position="351"/>
    </location>
</feature>
<feature type="glycosylation site" description="N-linked (GlcNAc...) asparagine" evidence="3">
    <location>
        <position position="418"/>
    </location>
</feature>
<feature type="glycosylation site" description="N-linked (GlcNAc...) asparagine" evidence="3">
    <location>
        <position position="455"/>
    </location>
</feature>
<feature type="disulfide bond" evidence="1">
    <location>
        <begin position="41"/>
        <end position="68"/>
    </location>
</feature>
<feature type="disulfide bond" evidence="1">
    <location>
        <begin position="94"/>
        <end position="112"/>
    </location>
</feature>
<feature type="disulfide bond" evidence="1">
    <location>
        <begin position="158"/>
        <end position="174"/>
    </location>
</feature>
<feature type="disulfide bond" evidence="1">
    <location>
        <begin position="178"/>
        <end position="200"/>
    </location>
</feature>
<feature type="splice variant" id="VSP_040221" description="In isoform 2." evidence="8">
    <original>D</original>
    <variation>G</variation>
    <location>
        <position position="539"/>
    </location>
</feature>
<feature type="splice variant" id="VSP_040222" description="In isoform 2." evidence="8">
    <location>
        <begin position="540"/>
        <end position="715"/>
    </location>
</feature>
<feature type="sequence conflict" description="In Ref. 1; BAC04663." evidence="9" ref="1">
    <original>N</original>
    <variation>D</variation>
    <location>
        <position position="57"/>
    </location>
</feature>
<feature type="sequence conflict" description="In Ref. 1; BAC05258." evidence="9" ref="1">
    <original>F</original>
    <variation>L</variation>
    <location>
        <position position="369"/>
    </location>
</feature>
<proteinExistence type="evidence at protein level"/>
<accession>Q8N8Z6</accession>
<accession>Q5H992</accession>
<accession>Q8IYK5</accession>
<accession>Q8N7L9</accession>
<accession>Q96NH2</accession>
<dbReference type="EMBL" id="AK098194">
    <property type="protein sequence ID" value="BAC05258.1"/>
    <property type="status" value="ALT_INIT"/>
    <property type="molecule type" value="mRNA"/>
</dbReference>
<dbReference type="EMBL" id="AK095973">
    <property type="protein sequence ID" value="BAC04663.1"/>
    <property type="status" value="ALT_FRAME"/>
    <property type="molecule type" value="mRNA"/>
</dbReference>
<dbReference type="EMBL" id="AL132671">
    <property type="status" value="NOT_ANNOTATED_CDS"/>
    <property type="molecule type" value="Genomic_DNA"/>
</dbReference>
<dbReference type="EMBL" id="Z85999">
    <property type="status" value="NOT_ANNOTATED_CDS"/>
    <property type="molecule type" value="Genomic_DNA"/>
</dbReference>
<dbReference type="EMBL" id="BC035671">
    <property type="protein sequence ID" value="AAH35671.1"/>
    <property type="molecule type" value="mRNA"/>
</dbReference>
<dbReference type="CCDS" id="CCDS34522.1">
    <molecule id="Q8N8Z6-2"/>
</dbReference>
<dbReference type="CCDS" id="CCDS93995.1">
    <molecule id="Q8N8Z6-1"/>
</dbReference>
<dbReference type="RefSeq" id="NP_001353387.1">
    <molecule id="Q8N8Z6-1"/>
    <property type="nucleotide sequence ID" value="NM_001366458.2"/>
</dbReference>
<dbReference type="RefSeq" id="NP_775945.1">
    <molecule id="Q8N8Z6-2"/>
    <property type="nucleotide sequence ID" value="NM_173674.3"/>
</dbReference>
<dbReference type="SMR" id="Q8N8Z6"/>
<dbReference type="BioGRID" id="130203">
    <property type="interactions" value="36"/>
</dbReference>
<dbReference type="FunCoup" id="Q8N8Z6">
    <property type="interactions" value="323"/>
</dbReference>
<dbReference type="IntAct" id="Q8N8Z6">
    <property type="interactions" value="15"/>
</dbReference>
<dbReference type="MINT" id="Q8N8Z6"/>
<dbReference type="STRING" id="9606.ENSP00000296955"/>
<dbReference type="GlyCosmos" id="Q8N8Z6">
    <property type="glycosylation" value="6 sites, No reported glycans"/>
</dbReference>
<dbReference type="GlyGen" id="Q8N8Z6">
    <property type="glycosylation" value="8 sites, 6 N-linked glycans (4 sites), 2 O-linked glycans (2 sites)"/>
</dbReference>
<dbReference type="iPTMnet" id="Q8N8Z6"/>
<dbReference type="PhosphoSitePlus" id="Q8N8Z6"/>
<dbReference type="SwissPalm" id="Q8N8Z6"/>
<dbReference type="BioMuta" id="DCBLD1"/>
<dbReference type="DMDM" id="50400555"/>
<dbReference type="jPOST" id="Q8N8Z6"/>
<dbReference type="MassIVE" id="Q8N8Z6"/>
<dbReference type="PaxDb" id="9606-ENSP00000296955"/>
<dbReference type="PeptideAtlas" id="Q8N8Z6"/>
<dbReference type="ProteomicsDB" id="72477">
    <molecule id="Q8N8Z6-1"/>
</dbReference>
<dbReference type="ProteomicsDB" id="72478">
    <molecule id="Q8N8Z6-2"/>
</dbReference>
<dbReference type="Antibodypedia" id="46584">
    <property type="antibodies" value="20 antibodies from 9 providers"/>
</dbReference>
<dbReference type="DNASU" id="285761"/>
<dbReference type="Ensembl" id="ENST00000296955.12">
    <molecule id="Q8N8Z6-2"/>
    <property type="protein sequence ID" value="ENSP00000296955.8"/>
    <property type="gene ID" value="ENSG00000164465.19"/>
</dbReference>
<dbReference type="Ensembl" id="ENST00000338728.10">
    <molecule id="Q8N8Z6-1"/>
    <property type="protein sequence ID" value="ENSP00000342422.6"/>
    <property type="gene ID" value="ENSG00000164465.19"/>
</dbReference>
<dbReference type="GeneID" id="285761"/>
<dbReference type="KEGG" id="hsa:285761"/>
<dbReference type="MANE-Select" id="ENST00000338728.10">
    <property type="protein sequence ID" value="ENSP00000342422.6"/>
    <property type="RefSeq nucleotide sequence ID" value="NM_001366458.2"/>
    <property type="RefSeq protein sequence ID" value="NP_001353387.1"/>
</dbReference>
<dbReference type="UCSC" id="uc003pxs.4">
    <molecule id="Q8N8Z6-1"/>
    <property type="organism name" value="human"/>
</dbReference>
<dbReference type="AGR" id="HGNC:21479"/>
<dbReference type="CTD" id="285761"/>
<dbReference type="DisGeNET" id="285761"/>
<dbReference type="GeneCards" id="DCBLD1"/>
<dbReference type="HGNC" id="HGNC:21479">
    <property type="gene designation" value="DCBLD1"/>
</dbReference>
<dbReference type="HPA" id="ENSG00000164465">
    <property type="expression patterns" value="Low tissue specificity"/>
</dbReference>
<dbReference type="neXtProt" id="NX_Q8N8Z6"/>
<dbReference type="OpenTargets" id="ENSG00000164465"/>
<dbReference type="PharmGKB" id="PA134903108"/>
<dbReference type="VEuPathDB" id="HostDB:ENSG00000164465"/>
<dbReference type="eggNOG" id="ENOG502QW5E">
    <property type="taxonomic scope" value="Eukaryota"/>
</dbReference>
<dbReference type="GeneTree" id="ENSGT00940000157334"/>
<dbReference type="HOGENOM" id="CLU_016654_3_0_1"/>
<dbReference type="InParanoid" id="Q8N8Z6"/>
<dbReference type="OMA" id="HDGDYQR"/>
<dbReference type="OrthoDB" id="441660at2759"/>
<dbReference type="PAN-GO" id="Q8N8Z6">
    <property type="GO annotations" value="2 GO annotations based on evolutionary models"/>
</dbReference>
<dbReference type="PhylomeDB" id="Q8N8Z6"/>
<dbReference type="PathwayCommons" id="Q8N8Z6"/>
<dbReference type="SignaLink" id="Q8N8Z6"/>
<dbReference type="BioGRID-ORCS" id="285761">
    <property type="hits" value="15 hits in 1164 CRISPR screens"/>
</dbReference>
<dbReference type="ChiTaRS" id="DCBLD1">
    <property type="organism name" value="human"/>
</dbReference>
<dbReference type="GenomeRNAi" id="285761"/>
<dbReference type="Pharos" id="Q8N8Z6">
    <property type="development level" value="Tbio"/>
</dbReference>
<dbReference type="PRO" id="PR:Q8N8Z6"/>
<dbReference type="Proteomes" id="UP000005640">
    <property type="component" value="Chromosome 6"/>
</dbReference>
<dbReference type="RNAct" id="Q8N8Z6">
    <property type="molecule type" value="protein"/>
</dbReference>
<dbReference type="Bgee" id="ENSG00000164465">
    <property type="expression patterns" value="Expressed in secondary oocyte and 146 other cell types or tissues"/>
</dbReference>
<dbReference type="ExpressionAtlas" id="Q8N8Z6">
    <property type="expression patterns" value="baseline and differential"/>
</dbReference>
<dbReference type="GO" id="GO:0005886">
    <property type="term" value="C:plasma membrane"/>
    <property type="evidence" value="ECO:0000318"/>
    <property type="project" value="GO_Central"/>
</dbReference>
<dbReference type="GO" id="GO:0038023">
    <property type="term" value="F:signaling receptor activity"/>
    <property type="evidence" value="ECO:0000318"/>
    <property type="project" value="GO_Central"/>
</dbReference>
<dbReference type="CDD" id="cd00041">
    <property type="entry name" value="CUB"/>
    <property type="match status" value="1"/>
</dbReference>
<dbReference type="CDD" id="cd00057">
    <property type="entry name" value="FA58C"/>
    <property type="match status" value="1"/>
</dbReference>
<dbReference type="FunFam" id="2.60.120.260:FF:000002">
    <property type="entry name" value="Coagulation factor VIII"/>
    <property type="match status" value="1"/>
</dbReference>
<dbReference type="Gene3D" id="2.60.120.260">
    <property type="entry name" value="Galactose-binding domain-like"/>
    <property type="match status" value="1"/>
</dbReference>
<dbReference type="Gene3D" id="2.170.130.20">
    <property type="entry name" value="LCCL-like domain"/>
    <property type="match status" value="1"/>
</dbReference>
<dbReference type="Gene3D" id="2.60.120.290">
    <property type="entry name" value="Spermadhesin, CUB domain"/>
    <property type="match status" value="1"/>
</dbReference>
<dbReference type="InterPro" id="IPR000859">
    <property type="entry name" value="CUB_dom"/>
</dbReference>
<dbReference type="InterPro" id="IPR000421">
    <property type="entry name" value="FA58C"/>
</dbReference>
<dbReference type="InterPro" id="IPR008979">
    <property type="entry name" value="Galactose-bd-like_sf"/>
</dbReference>
<dbReference type="InterPro" id="IPR004043">
    <property type="entry name" value="LCCL"/>
</dbReference>
<dbReference type="InterPro" id="IPR036609">
    <property type="entry name" value="LCCL_sf"/>
</dbReference>
<dbReference type="InterPro" id="IPR050633">
    <property type="entry name" value="Neuropilin_MCO_CoagFactor"/>
</dbReference>
<dbReference type="InterPro" id="IPR035914">
    <property type="entry name" value="Sperma_CUB_dom_sf"/>
</dbReference>
<dbReference type="PANTHER" id="PTHR46806:SF1">
    <property type="entry name" value="DISCOIDIN, CUB AND LCCL DOMAIN-CONTAINING PROTEIN 1"/>
    <property type="match status" value="1"/>
</dbReference>
<dbReference type="PANTHER" id="PTHR46806">
    <property type="entry name" value="F5/8 TYPE C DOMAIN-CONTAINING PROTEIN"/>
    <property type="match status" value="1"/>
</dbReference>
<dbReference type="Pfam" id="PF00431">
    <property type="entry name" value="CUB"/>
    <property type="match status" value="1"/>
</dbReference>
<dbReference type="Pfam" id="PF00754">
    <property type="entry name" value="F5_F8_type_C"/>
    <property type="match status" value="1"/>
</dbReference>
<dbReference type="Pfam" id="PF03815">
    <property type="entry name" value="LCCL"/>
    <property type="match status" value="1"/>
</dbReference>
<dbReference type="SMART" id="SM00042">
    <property type="entry name" value="CUB"/>
    <property type="match status" value="1"/>
</dbReference>
<dbReference type="SMART" id="SM00231">
    <property type="entry name" value="FA58C"/>
    <property type="match status" value="1"/>
</dbReference>
<dbReference type="SMART" id="SM00603">
    <property type="entry name" value="LCCL"/>
    <property type="match status" value="1"/>
</dbReference>
<dbReference type="SUPFAM" id="SSF49785">
    <property type="entry name" value="Galactose-binding domain-like"/>
    <property type="match status" value="1"/>
</dbReference>
<dbReference type="SUPFAM" id="SSF69848">
    <property type="entry name" value="LCCL domain"/>
    <property type="match status" value="1"/>
</dbReference>
<dbReference type="SUPFAM" id="SSF49854">
    <property type="entry name" value="Spermadhesin, CUB domain"/>
    <property type="match status" value="1"/>
</dbReference>
<dbReference type="PROSITE" id="PS01180">
    <property type="entry name" value="CUB"/>
    <property type="match status" value="1"/>
</dbReference>
<dbReference type="PROSITE" id="PS01285">
    <property type="entry name" value="FA58C_1"/>
    <property type="match status" value="1"/>
</dbReference>
<dbReference type="PROSITE" id="PS50022">
    <property type="entry name" value="FA58C_3"/>
    <property type="match status" value="1"/>
</dbReference>
<dbReference type="PROSITE" id="PS50820">
    <property type="entry name" value="LCCL"/>
    <property type="match status" value="1"/>
</dbReference>
<protein>
    <recommendedName>
        <fullName>Discoidin, CUB and LCCL domain-containing protein 1</fullName>
    </recommendedName>
</protein>
<sequence>MVPGARGGGALARAAGRGLLALLLAVSAPLRLQAEELGDGCGHLVTYQDSGTMTSKNYPGTYPNHTVCEKTITVPKGKRLILRLGDLDIESQTCASDYLLFTSSSDQYGPYCGSMTVPKELLLNTSEVTVRFESGSHISGRGFLLTYASSDHPDLITCLERASHYLKTEYSKFCPAGCRDVAGDISGNMVDGYRDTSLLCKAAIHAGIIADELGGQISVLQRKGISRYEGILANGVLSRDGSLSDKRFLFTSNGCSRSLSFEPDGQIRASSSWQSVNESGDQVHWSPGQARLQDQGPSWASGDSSNNHKPREWLEIDLGEKKKITGIRTTGSTQSNFNFYVKSFVMNFKNNNSKWKTYKGIVNNEEKVFQGNSNFRDPVQNNFIPPIVARYVRVVPQTWHQRIALKVELIGCQITQGNDSLVWRKTSQSTSVSTKKEDETITRPIPSEETSTGINITTVAIPLVLLVVLVFAGMGIFAAFRKKKKKGSPYGSAEAQKTDCWKQIKYPFARHQSAEFTISYDNEKEMTQKLDLITSDMADYQQPLMIGTGTVTRKGSTFRPMDTDAEEAGVSTDAGGHYDCPQRAGRHEYALPLAPPEPEYATPIVERHVLRAHTFSAQSGYRVPGPQPGHKHSLSSGGFSPVAGVGAQDGDYQRPHSAQPADRGYDRPKAVSALATESGHPDSQKPPTHPGTSDSYSAPRDCLTPLNQTAMTALL</sequence>
<reference key="1">
    <citation type="journal article" date="2004" name="Nat. Genet.">
        <title>Complete sequencing and characterization of 21,243 full-length human cDNAs.</title>
        <authorList>
            <person name="Ota T."/>
            <person name="Suzuki Y."/>
            <person name="Nishikawa T."/>
            <person name="Otsuki T."/>
            <person name="Sugiyama T."/>
            <person name="Irie R."/>
            <person name="Wakamatsu A."/>
            <person name="Hayashi K."/>
            <person name="Sato H."/>
            <person name="Nagai K."/>
            <person name="Kimura K."/>
            <person name="Makita H."/>
            <person name="Sekine M."/>
            <person name="Obayashi M."/>
            <person name="Nishi T."/>
            <person name="Shibahara T."/>
            <person name="Tanaka T."/>
            <person name="Ishii S."/>
            <person name="Yamamoto J."/>
            <person name="Saito K."/>
            <person name="Kawai Y."/>
            <person name="Isono Y."/>
            <person name="Nakamura Y."/>
            <person name="Nagahari K."/>
            <person name="Murakami K."/>
            <person name="Yasuda T."/>
            <person name="Iwayanagi T."/>
            <person name="Wagatsuma M."/>
            <person name="Shiratori A."/>
            <person name="Sudo H."/>
            <person name="Hosoiri T."/>
            <person name="Kaku Y."/>
            <person name="Kodaira H."/>
            <person name="Kondo H."/>
            <person name="Sugawara M."/>
            <person name="Takahashi M."/>
            <person name="Kanda K."/>
            <person name="Yokoi T."/>
            <person name="Furuya T."/>
            <person name="Kikkawa E."/>
            <person name="Omura Y."/>
            <person name="Abe K."/>
            <person name="Kamihara K."/>
            <person name="Katsuta N."/>
            <person name="Sato K."/>
            <person name="Tanikawa M."/>
            <person name="Yamazaki M."/>
            <person name="Ninomiya K."/>
            <person name="Ishibashi T."/>
            <person name="Yamashita H."/>
            <person name="Murakawa K."/>
            <person name="Fujimori K."/>
            <person name="Tanai H."/>
            <person name="Kimata M."/>
            <person name="Watanabe M."/>
            <person name="Hiraoka S."/>
            <person name="Chiba Y."/>
            <person name="Ishida S."/>
            <person name="Ono Y."/>
            <person name="Takiguchi S."/>
            <person name="Watanabe S."/>
            <person name="Yosida M."/>
            <person name="Hotuta T."/>
            <person name="Kusano J."/>
            <person name="Kanehori K."/>
            <person name="Takahashi-Fujii A."/>
            <person name="Hara H."/>
            <person name="Tanase T.-O."/>
            <person name="Nomura Y."/>
            <person name="Togiya S."/>
            <person name="Komai F."/>
            <person name="Hara R."/>
            <person name="Takeuchi K."/>
            <person name="Arita M."/>
            <person name="Imose N."/>
            <person name="Musashino K."/>
            <person name="Yuuki H."/>
            <person name="Oshima A."/>
            <person name="Sasaki N."/>
            <person name="Aotsuka S."/>
            <person name="Yoshikawa Y."/>
            <person name="Matsunawa H."/>
            <person name="Ichihara T."/>
            <person name="Shiohata N."/>
            <person name="Sano S."/>
            <person name="Moriya S."/>
            <person name="Momiyama H."/>
            <person name="Satoh N."/>
            <person name="Takami S."/>
            <person name="Terashima Y."/>
            <person name="Suzuki O."/>
            <person name="Nakagawa S."/>
            <person name="Senoh A."/>
            <person name="Mizoguchi H."/>
            <person name="Goto Y."/>
            <person name="Shimizu F."/>
            <person name="Wakebe H."/>
            <person name="Hishigaki H."/>
            <person name="Watanabe T."/>
            <person name="Sugiyama A."/>
            <person name="Takemoto M."/>
            <person name="Kawakami B."/>
            <person name="Yamazaki M."/>
            <person name="Watanabe K."/>
            <person name="Kumagai A."/>
            <person name="Itakura S."/>
            <person name="Fukuzumi Y."/>
            <person name="Fujimori Y."/>
            <person name="Komiyama M."/>
            <person name="Tashiro H."/>
            <person name="Tanigami A."/>
            <person name="Fujiwara T."/>
            <person name="Ono T."/>
            <person name="Yamada K."/>
            <person name="Fujii Y."/>
            <person name="Ozaki K."/>
            <person name="Hirao M."/>
            <person name="Ohmori Y."/>
            <person name="Kawabata A."/>
            <person name="Hikiji T."/>
            <person name="Kobatake N."/>
            <person name="Inagaki H."/>
            <person name="Ikema Y."/>
            <person name="Okamoto S."/>
            <person name="Okitani R."/>
            <person name="Kawakami T."/>
            <person name="Noguchi S."/>
            <person name="Itoh T."/>
            <person name="Shigeta K."/>
            <person name="Senba T."/>
            <person name="Matsumura K."/>
            <person name="Nakajima Y."/>
            <person name="Mizuno T."/>
            <person name="Morinaga M."/>
            <person name="Sasaki M."/>
            <person name="Togashi T."/>
            <person name="Oyama M."/>
            <person name="Hata H."/>
            <person name="Watanabe M."/>
            <person name="Komatsu T."/>
            <person name="Mizushima-Sugano J."/>
            <person name="Satoh T."/>
            <person name="Shirai Y."/>
            <person name="Takahashi Y."/>
            <person name="Nakagawa K."/>
            <person name="Okumura K."/>
            <person name="Nagase T."/>
            <person name="Nomura N."/>
            <person name="Kikuchi H."/>
            <person name="Masuho Y."/>
            <person name="Yamashita R."/>
            <person name="Nakai K."/>
            <person name="Yada T."/>
            <person name="Nakamura Y."/>
            <person name="Ohara O."/>
            <person name="Isogai T."/>
            <person name="Sugano S."/>
        </authorList>
    </citation>
    <scope>NUCLEOTIDE SEQUENCE [LARGE SCALE MRNA] (ISOFORM 1)</scope>
    <source>
        <tissue>Brain</tissue>
    </source>
</reference>
<reference key="2">
    <citation type="journal article" date="2003" name="Nature">
        <title>The DNA sequence and analysis of human chromosome 6.</title>
        <authorList>
            <person name="Mungall A.J."/>
            <person name="Palmer S.A."/>
            <person name="Sims S.K."/>
            <person name="Edwards C.A."/>
            <person name="Ashurst J.L."/>
            <person name="Wilming L."/>
            <person name="Jones M.C."/>
            <person name="Horton R."/>
            <person name="Hunt S.E."/>
            <person name="Scott C.E."/>
            <person name="Gilbert J.G.R."/>
            <person name="Clamp M.E."/>
            <person name="Bethel G."/>
            <person name="Milne S."/>
            <person name="Ainscough R."/>
            <person name="Almeida J.P."/>
            <person name="Ambrose K.D."/>
            <person name="Andrews T.D."/>
            <person name="Ashwell R.I.S."/>
            <person name="Babbage A.K."/>
            <person name="Bagguley C.L."/>
            <person name="Bailey J."/>
            <person name="Banerjee R."/>
            <person name="Barker D.J."/>
            <person name="Barlow K.F."/>
            <person name="Bates K."/>
            <person name="Beare D.M."/>
            <person name="Beasley H."/>
            <person name="Beasley O."/>
            <person name="Bird C.P."/>
            <person name="Blakey S.E."/>
            <person name="Bray-Allen S."/>
            <person name="Brook J."/>
            <person name="Brown A.J."/>
            <person name="Brown J.Y."/>
            <person name="Burford D.C."/>
            <person name="Burrill W."/>
            <person name="Burton J."/>
            <person name="Carder C."/>
            <person name="Carter N.P."/>
            <person name="Chapman J.C."/>
            <person name="Clark S.Y."/>
            <person name="Clark G."/>
            <person name="Clee C.M."/>
            <person name="Clegg S."/>
            <person name="Cobley V."/>
            <person name="Collier R.E."/>
            <person name="Collins J.E."/>
            <person name="Colman L.K."/>
            <person name="Corby N.R."/>
            <person name="Coville G.J."/>
            <person name="Culley K.M."/>
            <person name="Dhami P."/>
            <person name="Davies J."/>
            <person name="Dunn M."/>
            <person name="Earthrowl M.E."/>
            <person name="Ellington A.E."/>
            <person name="Evans K.A."/>
            <person name="Faulkner L."/>
            <person name="Francis M.D."/>
            <person name="Frankish A."/>
            <person name="Frankland J."/>
            <person name="French L."/>
            <person name="Garner P."/>
            <person name="Garnett J."/>
            <person name="Ghori M.J."/>
            <person name="Gilby L.M."/>
            <person name="Gillson C.J."/>
            <person name="Glithero R.J."/>
            <person name="Grafham D.V."/>
            <person name="Grant M."/>
            <person name="Gribble S."/>
            <person name="Griffiths C."/>
            <person name="Griffiths M.N.D."/>
            <person name="Hall R."/>
            <person name="Halls K.S."/>
            <person name="Hammond S."/>
            <person name="Harley J.L."/>
            <person name="Hart E.A."/>
            <person name="Heath P.D."/>
            <person name="Heathcott R."/>
            <person name="Holmes S.J."/>
            <person name="Howden P.J."/>
            <person name="Howe K.L."/>
            <person name="Howell G.R."/>
            <person name="Huckle E."/>
            <person name="Humphray S.J."/>
            <person name="Humphries M.D."/>
            <person name="Hunt A.R."/>
            <person name="Johnson C.M."/>
            <person name="Joy A.A."/>
            <person name="Kay M."/>
            <person name="Keenan S.J."/>
            <person name="Kimberley A.M."/>
            <person name="King A."/>
            <person name="Laird G.K."/>
            <person name="Langford C."/>
            <person name="Lawlor S."/>
            <person name="Leongamornlert D.A."/>
            <person name="Leversha M."/>
            <person name="Lloyd C.R."/>
            <person name="Lloyd D.M."/>
            <person name="Loveland J.E."/>
            <person name="Lovell J."/>
            <person name="Martin S."/>
            <person name="Mashreghi-Mohammadi M."/>
            <person name="Maslen G.L."/>
            <person name="Matthews L."/>
            <person name="McCann O.T."/>
            <person name="McLaren S.J."/>
            <person name="McLay K."/>
            <person name="McMurray A."/>
            <person name="Moore M.J.F."/>
            <person name="Mullikin J.C."/>
            <person name="Niblett D."/>
            <person name="Nickerson T."/>
            <person name="Novik K.L."/>
            <person name="Oliver K."/>
            <person name="Overton-Larty E.K."/>
            <person name="Parker A."/>
            <person name="Patel R."/>
            <person name="Pearce A.V."/>
            <person name="Peck A.I."/>
            <person name="Phillimore B.J.C.T."/>
            <person name="Phillips S."/>
            <person name="Plumb R.W."/>
            <person name="Porter K.M."/>
            <person name="Ramsey Y."/>
            <person name="Ranby S.A."/>
            <person name="Rice C.M."/>
            <person name="Ross M.T."/>
            <person name="Searle S.M."/>
            <person name="Sehra H.K."/>
            <person name="Sheridan E."/>
            <person name="Skuce C.D."/>
            <person name="Smith S."/>
            <person name="Smith M."/>
            <person name="Spraggon L."/>
            <person name="Squares S.L."/>
            <person name="Steward C.A."/>
            <person name="Sycamore N."/>
            <person name="Tamlyn-Hall G."/>
            <person name="Tester J."/>
            <person name="Theaker A.J."/>
            <person name="Thomas D.W."/>
            <person name="Thorpe A."/>
            <person name="Tracey A."/>
            <person name="Tromans A."/>
            <person name="Tubby B."/>
            <person name="Wall M."/>
            <person name="Wallis J.M."/>
            <person name="West A.P."/>
            <person name="White S.S."/>
            <person name="Whitehead S.L."/>
            <person name="Whittaker H."/>
            <person name="Wild A."/>
            <person name="Willey D.J."/>
            <person name="Wilmer T.E."/>
            <person name="Wood J.M."/>
            <person name="Wray P.W."/>
            <person name="Wyatt J.C."/>
            <person name="Young L."/>
            <person name="Younger R.M."/>
            <person name="Bentley D.R."/>
            <person name="Coulson A."/>
            <person name="Durbin R.M."/>
            <person name="Hubbard T."/>
            <person name="Sulston J.E."/>
            <person name="Dunham I."/>
            <person name="Rogers J."/>
            <person name="Beck S."/>
        </authorList>
    </citation>
    <scope>NUCLEOTIDE SEQUENCE [LARGE SCALE GENOMIC DNA]</scope>
</reference>
<reference key="3">
    <citation type="journal article" date="2004" name="Genome Res.">
        <title>The status, quality, and expansion of the NIH full-length cDNA project: the Mammalian Gene Collection (MGC).</title>
        <authorList>
            <consortium name="The MGC Project Team"/>
        </authorList>
    </citation>
    <scope>NUCLEOTIDE SEQUENCE [LARGE SCALE MRNA] (ISOFORM 2)</scope>
    <source>
        <tissue>Brain</tissue>
    </source>
</reference>
<reference key="4">
    <citation type="journal article" date="2006" name="Cell">
        <title>Global, in vivo, and site-specific phosphorylation dynamics in signaling networks.</title>
        <authorList>
            <person name="Olsen J.V."/>
            <person name="Blagoev B."/>
            <person name="Gnad F."/>
            <person name="Macek B."/>
            <person name="Kumar C."/>
            <person name="Mortensen P."/>
            <person name="Mann M."/>
        </authorList>
    </citation>
    <scope>IDENTIFICATION BY MASS SPECTROMETRY [LARGE SCALE ANALYSIS]</scope>
    <source>
        <tissue>Cervix carcinoma</tissue>
    </source>
</reference>
<reference key="5">
    <citation type="journal article" date="2010" name="Sci. Signal.">
        <title>Quantitative phosphoproteomics reveals widespread full phosphorylation site occupancy during mitosis.</title>
        <authorList>
            <person name="Olsen J.V."/>
            <person name="Vermeulen M."/>
            <person name="Santamaria A."/>
            <person name="Kumar C."/>
            <person name="Miller M.L."/>
            <person name="Jensen L.J."/>
            <person name="Gnad F."/>
            <person name="Cox J."/>
            <person name="Jensen T.S."/>
            <person name="Nigg E.A."/>
            <person name="Brunak S."/>
            <person name="Mann M."/>
        </authorList>
    </citation>
    <scope>IDENTIFICATION BY MASS SPECTROMETRY [LARGE SCALE ANALYSIS]</scope>
    <source>
        <tissue>Cervix carcinoma</tissue>
    </source>
</reference>
<reference key="6">
    <citation type="journal article" date="2013" name="J. Proteome Res.">
        <title>Toward a comprehensive characterization of a human cancer cell phosphoproteome.</title>
        <authorList>
            <person name="Zhou H."/>
            <person name="Di Palma S."/>
            <person name="Preisinger C."/>
            <person name="Peng M."/>
            <person name="Polat A.N."/>
            <person name="Heck A.J."/>
            <person name="Mohammed S."/>
        </authorList>
    </citation>
    <scope>PHOSPHORYLATION [LARGE SCALE ANALYSIS] AT THR-614</scope>
    <scope>IDENTIFICATION BY MASS SPECTROMETRY [LARGE SCALE ANALYSIS]</scope>
    <source>
        <tissue>Cervix carcinoma</tissue>
        <tissue>Erythroleukemia</tissue>
    </source>
</reference>